<keyword id="KW-0067">ATP-binding</keyword>
<keyword id="KW-0460">Magnesium</keyword>
<keyword id="KW-0547">Nucleotide-binding</keyword>
<keyword id="KW-0808">Transferase</keyword>
<keyword id="KW-0819">tRNA processing</keyword>
<comment type="function">
    <text evidence="1">Catalyzes the transfer of a dimethylallyl group onto the adenine at position 37 in tRNAs that read codons beginning with uridine, leading to the formation of N6-(dimethylallyl)adenosine (i(6)A).</text>
</comment>
<comment type="catalytic activity">
    <reaction evidence="1">
        <text>adenosine(37) in tRNA + dimethylallyl diphosphate = N(6)-dimethylallyladenosine(37) in tRNA + diphosphate</text>
        <dbReference type="Rhea" id="RHEA:26482"/>
        <dbReference type="Rhea" id="RHEA-COMP:10162"/>
        <dbReference type="Rhea" id="RHEA-COMP:10375"/>
        <dbReference type="ChEBI" id="CHEBI:33019"/>
        <dbReference type="ChEBI" id="CHEBI:57623"/>
        <dbReference type="ChEBI" id="CHEBI:74411"/>
        <dbReference type="ChEBI" id="CHEBI:74415"/>
        <dbReference type="EC" id="2.5.1.75"/>
    </reaction>
</comment>
<comment type="cofactor">
    <cofactor evidence="1">
        <name>Mg(2+)</name>
        <dbReference type="ChEBI" id="CHEBI:18420"/>
    </cofactor>
</comment>
<comment type="subunit">
    <text evidence="1">Monomer.</text>
</comment>
<comment type="similarity">
    <text evidence="1">Belongs to the IPP transferase family.</text>
</comment>
<evidence type="ECO:0000255" key="1">
    <source>
        <dbReference type="HAMAP-Rule" id="MF_00185"/>
    </source>
</evidence>
<name>MIAA_EHRRW</name>
<sequence>MNNVLIITGPTASGKSKISIKIAQDNNGVIINCDSKQIYKEIPIITDQPKLNETFIPHKLYGYVSAVKQYSVAEWVNDLKREIYQTFTENKLPIITGGSGMYISSIIYGLSQIPAIEENIRYQTKQLFNTLGNKEFYSLLIEKDPIAKRLHYNNSYQLLRAYEVIEQTGTSIFRLQEELKRKPLFDNFTLCILVPQRQEVYKKINDRFISMINSSVIEEVKNLISLNIPNHFPAMKAHGIPEIIQYLTNKISIEKAIEIAQRNTRHYAKRQYTWFKNQFPNALFYESQDQLLKFISKKFK</sequence>
<accession>Q5HB92</accession>
<accession>Q5FEY9</accession>
<feature type="chain" id="PRO_0000377154" description="tRNA dimethylallyltransferase">
    <location>
        <begin position="1"/>
        <end position="300"/>
    </location>
</feature>
<feature type="region of interest" description="Interaction with substrate tRNA" evidence="1">
    <location>
        <begin position="34"/>
        <end position="37"/>
    </location>
</feature>
<feature type="binding site" evidence="1">
    <location>
        <begin position="9"/>
        <end position="16"/>
    </location>
    <ligand>
        <name>ATP</name>
        <dbReference type="ChEBI" id="CHEBI:30616"/>
    </ligand>
</feature>
<feature type="binding site" evidence="1">
    <location>
        <begin position="11"/>
        <end position="16"/>
    </location>
    <ligand>
        <name>substrate</name>
    </ligand>
</feature>
<feature type="site" description="Interaction with substrate tRNA" evidence="1">
    <location>
        <position position="99"/>
    </location>
</feature>
<feature type="site" description="Interaction with substrate tRNA" evidence="1">
    <location>
        <position position="121"/>
    </location>
</feature>
<proteinExistence type="inferred from homology"/>
<dbReference type="EC" id="2.5.1.75" evidence="1"/>
<dbReference type="EMBL" id="CR767821">
    <property type="protein sequence ID" value="CAH58163.1"/>
    <property type="molecule type" value="Genomic_DNA"/>
</dbReference>
<dbReference type="EMBL" id="CR925678">
    <property type="protein sequence ID" value="CAI26950.1"/>
    <property type="molecule type" value="Genomic_DNA"/>
</dbReference>
<dbReference type="RefSeq" id="WP_011155119.1">
    <property type="nucleotide sequence ID" value="NC_005295.2"/>
</dbReference>
<dbReference type="SMR" id="Q5HB92"/>
<dbReference type="GeneID" id="33058453"/>
<dbReference type="KEGG" id="eru:Erum4370"/>
<dbReference type="KEGG" id="erw:ERWE_CDS_04560"/>
<dbReference type="eggNOG" id="COG0324">
    <property type="taxonomic scope" value="Bacteria"/>
</dbReference>
<dbReference type="HOGENOM" id="CLU_032616_0_1_5"/>
<dbReference type="Proteomes" id="UP000001021">
    <property type="component" value="Chromosome"/>
</dbReference>
<dbReference type="GO" id="GO:0005524">
    <property type="term" value="F:ATP binding"/>
    <property type="evidence" value="ECO:0007669"/>
    <property type="project" value="UniProtKB-UniRule"/>
</dbReference>
<dbReference type="GO" id="GO:0052381">
    <property type="term" value="F:tRNA dimethylallyltransferase activity"/>
    <property type="evidence" value="ECO:0007669"/>
    <property type="project" value="UniProtKB-UniRule"/>
</dbReference>
<dbReference type="GO" id="GO:0006400">
    <property type="term" value="P:tRNA modification"/>
    <property type="evidence" value="ECO:0007669"/>
    <property type="project" value="TreeGrafter"/>
</dbReference>
<dbReference type="Gene3D" id="1.10.20.140">
    <property type="match status" value="1"/>
</dbReference>
<dbReference type="Gene3D" id="3.40.50.300">
    <property type="entry name" value="P-loop containing nucleotide triphosphate hydrolases"/>
    <property type="match status" value="1"/>
</dbReference>
<dbReference type="HAMAP" id="MF_00185">
    <property type="entry name" value="IPP_trans"/>
    <property type="match status" value="1"/>
</dbReference>
<dbReference type="InterPro" id="IPR039657">
    <property type="entry name" value="Dimethylallyltransferase"/>
</dbReference>
<dbReference type="InterPro" id="IPR018022">
    <property type="entry name" value="IPT"/>
</dbReference>
<dbReference type="InterPro" id="IPR027417">
    <property type="entry name" value="P-loop_NTPase"/>
</dbReference>
<dbReference type="NCBIfam" id="TIGR00174">
    <property type="entry name" value="miaA"/>
    <property type="match status" value="1"/>
</dbReference>
<dbReference type="PANTHER" id="PTHR11088">
    <property type="entry name" value="TRNA DIMETHYLALLYLTRANSFERASE"/>
    <property type="match status" value="1"/>
</dbReference>
<dbReference type="PANTHER" id="PTHR11088:SF60">
    <property type="entry name" value="TRNA DIMETHYLALLYLTRANSFERASE"/>
    <property type="match status" value="1"/>
</dbReference>
<dbReference type="Pfam" id="PF01715">
    <property type="entry name" value="IPPT"/>
    <property type="match status" value="1"/>
</dbReference>
<dbReference type="SUPFAM" id="SSF52540">
    <property type="entry name" value="P-loop containing nucleoside triphosphate hydrolases"/>
    <property type="match status" value="2"/>
</dbReference>
<organism>
    <name type="scientific">Ehrlichia ruminantium (strain Welgevonden)</name>
    <dbReference type="NCBI Taxonomy" id="254945"/>
    <lineage>
        <taxon>Bacteria</taxon>
        <taxon>Pseudomonadati</taxon>
        <taxon>Pseudomonadota</taxon>
        <taxon>Alphaproteobacteria</taxon>
        <taxon>Rickettsiales</taxon>
        <taxon>Anaplasmataceae</taxon>
        <taxon>Ehrlichia</taxon>
    </lineage>
</organism>
<protein>
    <recommendedName>
        <fullName evidence="1">tRNA dimethylallyltransferase</fullName>
        <ecNumber evidence="1">2.5.1.75</ecNumber>
    </recommendedName>
    <alternativeName>
        <fullName evidence="1">Dimethylallyl diphosphate:tRNA dimethylallyltransferase</fullName>
        <shortName evidence="1">DMAPP:tRNA dimethylallyltransferase</shortName>
        <shortName evidence="1">DMATase</shortName>
    </alternativeName>
    <alternativeName>
        <fullName evidence="1">Isopentenyl-diphosphate:tRNA isopentenyltransferase</fullName>
        <shortName evidence="1">IPP transferase</shortName>
        <shortName evidence="1">IPPT</shortName>
        <shortName evidence="1">IPTase</shortName>
    </alternativeName>
</protein>
<gene>
    <name evidence="1" type="primary">miaA</name>
    <name type="ordered locus">Erum4370</name>
    <name type="ordered locus">ERWE_CDS_04560</name>
</gene>
<reference key="1">
    <citation type="journal article" date="2005" name="Proc. Natl. Acad. Sci. U.S.A.">
        <title>The genome of the heartwater agent Ehrlichia ruminantium contains multiple tandem repeats of actively variable copy number.</title>
        <authorList>
            <person name="Collins N.E."/>
            <person name="Liebenberg J."/>
            <person name="de Villiers E.P."/>
            <person name="Brayton K.A."/>
            <person name="Louw E."/>
            <person name="Pretorius A."/>
            <person name="Faber F.E."/>
            <person name="van Heerden H."/>
            <person name="Josemans A."/>
            <person name="van Kleef M."/>
            <person name="Steyn H.C."/>
            <person name="van Strijp M.F."/>
            <person name="Zweygarth E."/>
            <person name="Jongejan F."/>
            <person name="Maillard J.C."/>
            <person name="Berthier D."/>
            <person name="Botha M."/>
            <person name="Joubert F."/>
            <person name="Corton C.H."/>
            <person name="Thomson N.R."/>
            <person name="Allsopp M.T."/>
            <person name="Allsopp B.A."/>
        </authorList>
    </citation>
    <scope>NUCLEOTIDE SEQUENCE [LARGE SCALE GENOMIC DNA]</scope>
    <source>
        <strain>Welgevonden</strain>
    </source>
</reference>
<reference key="2">
    <citation type="journal article" date="2006" name="J. Bacteriol.">
        <title>Comparative genomic analysis of three strains of Ehrlichia ruminantium reveals an active process of genome size plasticity.</title>
        <authorList>
            <person name="Frutos R."/>
            <person name="Viari A."/>
            <person name="Ferraz C."/>
            <person name="Morgat A."/>
            <person name="Eychenie S."/>
            <person name="Kandassamy Y."/>
            <person name="Chantal I."/>
            <person name="Bensaid A."/>
            <person name="Coissac E."/>
            <person name="Vachiery N."/>
            <person name="Demaille J."/>
            <person name="Martinez D."/>
        </authorList>
    </citation>
    <scope>NUCLEOTIDE SEQUENCE [LARGE SCALE GENOMIC DNA]</scope>
    <source>
        <strain>Welgevonden</strain>
    </source>
</reference>